<feature type="chain" id="PRO_1000002790" description="Crossover junction endodeoxyribonuclease RuvC">
    <location>
        <begin position="1"/>
        <end position="182"/>
    </location>
</feature>
<feature type="active site" evidence="1">
    <location>
        <position position="7"/>
    </location>
</feature>
<feature type="active site" evidence="1">
    <location>
        <position position="69"/>
    </location>
</feature>
<feature type="active site" evidence="1">
    <location>
        <position position="141"/>
    </location>
</feature>
<feature type="binding site" evidence="1">
    <location>
        <position position="7"/>
    </location>
    <ligand>
        <name>Mg(2+)</name>
        <dbReference type="ChEBI" id="CHEBI:18420"/>
        <label>1</label>
    </ligand>
</feature>
<feature type="binding site" evidence="1">
    <location>
        <position position="69"/>
    </location>
    <ligand>
        <name>Mg(2+)</name>
        <dbReference type="ChEBI" id="CHEBI:18420"/>
        <label>2</label>
    </ligand>
</feature>
<feature type="binding site" evidence="1">
    <location>
        <position position="141"/>
    </location>
    <ligand>
        <name>Mg(2+)</name>
        <dbReference type="ChEBI" id="CHEBI:18420"/>
        <label>1</label>
    </ligand>
</feature>
<comment type="function">
    <text evidence="1">The RuvA-RuvB-RuvC complex processes Holliday junction (HJ) DNA during genetic recombination and DNA repair. Endonuclease that resolves HJ intermediates. Cleaves cruciform DNA by making single-stranded nicks across the HJ at symmetrical positions within the homologous arms, yielding a 5'-phosphate and a 3'-hydroxyl group; requires a central core of homology in the junction. The consensus cleavage sequence is 5'-(A/T)TT(C/G)-3'. Cleavage occurs on the 3'-side of the TT dinucleotide at the point of strand exchange. HJ branch migration catalyzed by RuvA-RuvB allows RuvC to scan DNA until it finds its consensus sequence, where it cleaves and resolves the cruciform DNA.</text>
</comment>
<comment type="catalytic activity">
    <reaction evidence="1">
        <text>Endonucleolytic cleavage at a junction such as a reciprocal single-stranded crossover between two homologous DNA duplexes (Holliday junction).</text>
        <dbReference type="EC" id="3.1.21.10"/>
    </reaction>
</comment>
<comment type="cofactor">
    <cofactor evidence="1">
        <name>Mg(2+)</name>
        <dbReference type="ChEBI" id="CHEBI:18420"/>
    </cofactor>
    <text evidence="1">Binds 2 Mg(2+) ion per subunit.</text>
</comment>
<comment type="subunit">
    <text evidence="1">Homodimer which binds Holliday junction (HJ) DNA. The HJ becomes 2-fold symmetrical on binding to RuvC with unstacked arms; it has a different conformation from HJ DNA in complex with RuvA. In the full resolvosome a probable DNA-RuvA(4)-RuvB(12)-RuvC(2) complex forms which resolves the HJ.</text>
</comment>
<comment type="subcellular location">
    <subcellularLocation>
        <location evidence="1">Cytoplasm</location>
    </subcellularLocation>
</comment>
<comment type="similarity">
    <text evidence="1">Belongs to the RuvC family.</text>
</comment>
<reference key="1">
    <citation type="journal article" date="2009" name="Environ. Microbiol.">
        <title>The genome of Polaromonas naphthalenivorans strain CJ2, isolated from coal tar-contaminated sediment, reveals physiological and metabolic versatility and evolution through extensive horizontal gene transfer.</title>
        <authorList>
            <person name="Yagi J.M."/>
            <person name="Sims D."/>
            <person name="Brettin T."/>
            <person name="Bruce D."/>
            <person name="Madsen E.L."/>
        </authorList>
    </citation>
    <scope>NUCLEOTIDE SEQUENCE [LARGE SCALE GENOMIC DNA]</scope>
    <source>
        <strain>CJ2</strain>
    </source>
</reference>
<organism>
    <name type="scientific">Polaromonas naphthalenivorans (strain CJ2)</name>
    <dbReference type="NCBI Taxonomy" id="365044"/>
    <lineage>
        <taxon>Bacteria</taxon>
        <taxon>Pseudomonadati</taxon>
        <taxon>Pseudomonadota</taxon>
        <taxon>Betaproteobacteria</taxon>
        <taxon>Burkholderiales</taxon>
        <taxon>Comamonadaceae</taxon>
        <taxon>Polaromonas</taxon>
    </lineage>
</organism>
<protein>
    <recommendedName>
        <fullName evidence="1">Crossover junction endodeoxyribonuclease RuvC</fullName>
        <ecNumber evidence="1">3.1.21.10</ecNumber>
    </recommendedName>
    <alternativeName>
        <fullName evidence="1">Holliday junction nuclease RuvC</fullName>
    </alternativeName>
    <alternativeName>
        <fullName evidence="1">Holliday junction resolvase RuvC</fullName>
    </alternativeName>
</protein>
<sequence>MHILGIDPGLQITGFGVVDMDGPHLRYVASGTIKTTHLDTKDLPGRLKVLFDGVREVVQRYQPEVASVEIVFVNVNPQATLLLGQARGACITALVSSDLAVAEYTALQMKKAVAGYGKAGKAEVQQMVMRLLKLPSLPGKDAADALGLAITHAHVGTAMARLALASEAGGKMDGNYRAGRSR</sequence>
<accession>A1VSS8</accession>
<name>RUVC_POLNA</name>
<gene>
    <name evidence="1" type="primary">ruvC</name>
    <name type="ordered locus">Pnap_3409</name>
</gene>
<proteinExistence type="inferred from homology"/>
<dbReference type="EC" id="3.1.21.10" evidence="1"/>
<dbReference type="EMBL" id="CP000529">
    <property type="protein sequence ID" value="ABM38706.1"/>
    <property type="molecule type" value="Genomic_DNA"/>
</dbReference>
<dbReference type="RefSeq" id="WP_011802777.1">
    <property type="nucleotide sequence ID" value="NC_008781.1"/>
</dbReference>
<dbReference type="SMR" id="A1VSS8"/>
<dbReference type="STRING" id="365044.Pnap_3409"/>
<dbReference type="KEGG" id="pna:Pnap_3409"/>
<dbReference type="eggNOG" id="COG0817">
    <property type="taxonomic scope" value="Bacteria"/>
</dbReference>
<dbReference type="HOGENOM" id="CLU_091257_3_1_4"/>
<dbReference type="OrthoDB" id="9805499at2"/>
<dbReference type="Proteomes" id="UP000000644">
    <property type="component" value="Chromosome"/>
</dbReference>
<dbReference type="GO" id="GO:0005737">
    <property type="term" value="C:cytoplasm"/>
    <property type="evidence" value="ECO:0007669"/>
    <property type="project" value="UniProtKB-SubCell"/>
</dbReference>
<dbReference type="GO" id="GO:0048476">
    <property type="term" value="C:Holliday junction resolvase complex"/>
    <property type="evidence" value="ECO:0007669"/>
    <property type="project" value="UniProtKB-UniRule"/>
</dbReference>
<dbReference type="GO" id="GO:0008821">
    <property type="term" value="F:crossover junction DNA endonuclease activity"/>
    <property type="evidence" value="ECO:0007669"/>
    <property type="project" value="UniProtKB-UniRule"/>
</dbReference>
<dbReference type="GO" id="GO:0003677">
    <property type="term" value="F:DNA binding"/>
    <property type="evidence" value="ECO:0007669"/>
    <property type="project" value="UniProtKB-KW"/>
</dbReference>
<dbReference type="GO" id="GO:0000287">
    <property type="term" value="F:magnesium ion binding"/>
    <property type="evidence" value="ECO:0007669"/>
    <property type="project" value="UniProtKB-UniRule"/>
</dbReference>
<dbReference type="GO" id="GO:0006310">
    <property type="term" value="P:DNA recombination"/>
    <property type="evidence" value="ECO:0007669"/>
    <property type="project" value="UniProtKB-UniRule"/>
</dbReference>
<dbReference type="GO" id="GO:0006281">
    <property type="term" value="P:DNA repair"/>
    <property type="evidence" value="ECO:0007669"/>
    <property type="project" value="UniProtKB-UniRule"/>
</dbReference>
<dbReference type="CDD" id="cd16962">
    <property type="entry name" value="RuvC"/>
    <property type="match status" value="1"/>
</dbReference>
<dbReference type="FunFam" id="3.30.420.10:FF:000002">
    <property type="entry name" value="Crossover junction endodeoxyribonuclease RuvC"/>
    <property type="match status" value="1"/>
</dbReference>
<dbReference type="Gene3D" id="3.30.420.10">
    <property type="entry name" value="Ribonuclease H-like superfamily/Ribonuclease H"/>
    <property type="match status" value="1"/>
</dbReference>
<dbReference type="HAMAP" id="MF_00034">
    <property type="entry name" value="RuvC"/>
    <property type="match status" value="1"/>
</dbReference>
<dbReference type="InterPro" id="IPR012337">
    <property type="entry name" value="RNaseH-like_sf"/>
</dbReference>
<dbReference type="InterPro" id="IPR036397">
    <property type="entry name" value="RNaseH_sf"/>
</dbReference>
<dbReference type="InterPro" id="IPR020563">
    <property type="entry name" value="X-over_junc_endoDNase_Mg_BS"/>
</dbReference>
<dbReference type="InterPro" id="IPR002176">
    <property type="entry name" value="X-over_junc_endoDNase_RuvC"/>
</dbReference>
<dbReference type="NCBIfam" id="TIGR00228">
    <property type="entry name" value="ruvC"/>
    <property type="match status" value="1"/>
</dbReference>
<dbReference type="PANTHER" id="PTHR30194">
    <property type="entry name" value="CROSSOVER JUNCTION ENDODEOXYRIBONUCLEASE RUVC"/>
    <property type="match status" value="1"/>
</dbReference>
<dbReference type="PANTHER" id="PTHR30194:SF3">
    <property type="entry name" value="CROSSOVER JUNCTION ENDODEOXYRIBONUCLEASE RUVC"/>
    <property type="match status" value="1"/>
</dbReference>
<dbReference type="Pfam" id="PF02075">
    <property type="entry name" value="RuvC"/>
    <property type="match status" value="1"/>
</dbReference>
<dbReference type="PRINTS" id="PR00696">
    <property type="entry name" value="RSOLVASERUVC"/>
</dbReference>
<dbReference type="SUPFAM" id="SSF53098">
    <property type="entry name" value="Ribonuclease H-like"/>
    <property type="match status" value="1"/>
</dbReference>
<dbReference type="PROSITE" id="PS01321">
    <property type="entry name" value="RUVC"/>
    <property type="match status" value="1"/>
</dbReference>
<keyword id="KW-0963">Cytoplasm</keyword>
<keyword id="KW-0227">DNA damage</keyword>
<keyword id="KW-0233">DNA recombination</keyword>
<keyword id="KW-0234">DNA repair</keyword>
<keyword id="KW-0238">DNA-binding</keyword>
<keyword id="KW-0255">Endonuclease</keyword>
<keyword id="KW-0378">Hydrolase</keyword>
<keyword id="KW-0460">Magnesium</keyword>
<keyword id="KW-0479">Metal-binding</keyword>
<keyword id="KW-0540">Nuclease</keyword>
<keyword id="KW-1185">Reference proteome</keyword>
<evidence type="ECO:0000255" key="1">
    <source>
        <dbReference type="HAMAP-Rule" id="MF_00034"/>
    </source>
</evidence>